<keyword id="KW-1003">Cell membrane</keyword>
<keyword id="KW-0350">Heme biosynthesis</keyword>
<keyword id="KW-0472">Membrane</keyword>
<keyword id="KW-0808">Transferase</keyword>
<keyword id="KW-0812">Transmembrane</keyword>
<keyword id="KW-1133">Transmembrane helix</keyword>
<dbReference type="EC" id="2.5.1.141" evidence="1"/>
<dbReference type="EMBL" id="CP001283">
    <property type="protein sequence ID" value="ACK89895.1"/>
    <property type="molecule type" value="Genomic_DNA"/>
</dbReference>
<dbReference type="RefSeq" id="WP_001015052.1">
    <property type="nucleotide sequence ID" value="NC_011773.1"/>
</dbReference>
<dbReference type="SMR" id="B7JK33"/>
<dbReference type="GeneID" id="45023832"/>
<dbReference type="KEGG" id="bcu:BCAH820_3960"/>
<dbReference type="HOGENOM" id="CLU_029631_0_0_9"/>
<dbReference type="UniPathway" id="UPA00834">
    <property type="reaction ID" value="UER00712"/>
</dbReference>
<dbReference type="Proteomes" id="UP000001363">
    <property type="component" value="Chromosome"/>
</dbReference>
<dbReference type="GO" id="GO:0005886">
    <property type="term" value="C:plasma membrane"/>
    <property type="evidence" value="ECO:0007669"/>
    <property type="project" value="UniProtKB-SubCell"/>
</dbReference>
<dbReference type="GO" id="GO:0008495">
    <property type="term" value="F:protoheme IX farnesyltransferase activity"/>
    <property type="evidence" value="ECO:0007669"/>
    <property type="project" value="UniProtKB-UniRule"/>
</dbReference>
<dbReference type="GO" id="GO:0048034">
    <property type="term" value="P:heme O biosynthetic process"/>
    <property type="evidence" value="ECO:0007669"/>
    <property type="project" value="UniProtKB-UniRule"/>
</dbReference>
<dbReference type="CDD" id="cd13957">
    <property type="entry name" value="PT_UbiA_Cox10"/>
    <property type="match status" value="1"/>
</dbReference>
<dbReference type="FunFam" id="1.10.357.140:FF:000001">
    <property type="entry name" value="Protoheme IX farnesyltransferase"/>
    <property type="match status" value="1"/>
</dbReference>
<dbReference type="Gene3D" id="1.10.357.140">
    <property type="entry name" value="UbiA prenyltransferase"/>
    <property type="match status" value="1"/>
</dbReference>
<dbReference type="HAMAP" id="MF_00154">
    <property type="entry name" value="CyoE_CtaB"/>
    <property type="match status" value="1"/>
</dbReference>
<dbReference type="InterPro" id="IPR006369">
    <property type="entry name" value="Protohaem_IX_farnesylTrfase"/>
</dbReference>
<dbReference type="InterPro" id="IPR000537">
    <property type="entry name" value="UbiA_prenyltransferase"/>
</dbReference>
<dbReference type="InterPro" id="IPR030470">
    <property type="entry name" value="UbiA_prenylTrfase_CS"/>
</dbReference>
<dbReference type="InterPro" id="IPR044878">
    <property type="entry name" value="UbiA_sf"/>
</dbReference>
<dbReference type="NCBIfam" id="TIGR01473">
    <property type="entry name" value="cyoE_ctaB"/>
    <property type="match status" value="1"/>
</dbReference>
<dbReference type="PANTHER" id="PTHR43448">
    <property type="entry name" value="PROTOHEME IX FARNESYLTRANSFERASE, MITOCHONDRIAL"/>
    <property type="match status" value="1"/>
</dbReference>
<dbReference type="PANTHER" id="PTHR43448:SF2">
    <property type="entry name" value="PROTOHEME IX FARNESYLTRANSFERASE, MITOCHONDRIAL"/>
    <property type="match status" value="1"/>
</dbReference>
<dbReference type="Pfam" id="PF01040">
    <property type="entry name" value="UbiA"/>
    <property type="match status" value="1"/>
</dbReference>
<dbReference type="PROSITE" id="PS00943">
    <property type="entry name" value="UBIA"/>
    <property type="match status" value="1"/>
</dbReference>
<accession>B7JK33</accession>
<reference key="1">
    <citation type="submission" date="2008-10" db="EMBL/GenBank/DDBJ databases">
        <title>Genome sequence of Bacillus cereus AH820.</title>
        <authorList>
            <person name="Dodson R.J."/>
            <person name="Durkin A.S."/>
            <person name="Rosovitz M.J."/>
            <person name="Rasko D.A."/>
            <person name="Hoffmaster A."/>
            <person name="Ravel J."/>
            <person name="Sutton G."/>
        </authorList>
    </citation>
    <scope>NUCLEOTIDE SEQUENCE [LARGE SCALE GENOMIC DNA]</scope>
    <source>
        <strain>AH820</strain>
    </source>
</reference>
<evidence type="ECO:0000255" key="1">
    <source>
        <dbReference type="HAMAP-Rule" id="MF_00154"/>
    </source>
</evidence>
<organism>
    <name type="scientific">Bacillus cereus (strain AH820)</name>
    <dbReference type="NCBI Taxonomy" id="405535"/>
    <lineage>
        <taxon>Bacteria</taxon>
        <taxon>Bacillati</taxon>
        <taxon>Bacillota</taxon>
        <taxon>Bacilli</taxon>
        <taxon>Bacillales</taxon>
        <taxon>Bacillaceae</taxon>
        <taxon>Bacillus</taxon>
        <taxon>Bacillus cereus group</taxon>
    </lineage>
</organism>
<protein>
    <recommendedName>
        <fullName evidence="1">Protoheme IX farnesyltransferase</fullName>
        <ecNumber evidence="1">2.5.1.141</ecNumber>
    </recommendedName>
    <alternativeName>
        <fullName evidence="1">Heme B farnesyltransferase</fullName>
    </alternativeName>
    <alternativeName>
        <fullName evidence="1">Heme O synthase</fullName>
    </alternativeName>
</protein>
<proteinExistence type="inferred from homology"/>
<comment type="function">
    <text evidence="1">Converts heme B (protoheme IX) to heme O by substitution of the vinyl group on carbon 2 of heme B porphyrin ring with a hydroxyethyl farnesyl side group.</text>
</comment>
<comment type="catalytic activity">
    <reaction evidence="1">
        <text>heme b + (2E,6E)-farnesyl diphosphate + H2O = Fe(II)-heme o + diphosphate</text>
        <dbReference type="Rhea" id="RHEA:28070"/>
        <dbReference type="ChEBI" id="CHEBI:15377"/>
        <dbReference type="ChEBI" id="CHEBI:33019"/>
        <dbReference type="ChEBI" id="CHEBI:60344"/>
        <dbReference type="ChEBI" id="CHEBI:60530"/>
        <dbReference type="ChEBI" id="CHEBI:175763"/>
        <dbReference type="EC" id="2.5.1.141"/>
    </reaction>
</comment>
<comment type="pathway">
    <text evidence="1">Porphyrin-containing compound metabolism; heme O biosynthesis; heme O from protoheme: step 1/1.</text>
</comment>
<comment type="subunit">
    <text evidence="1">Interacts with CtaA.</text>
</comment>
<comment type="subcellular location">
    <subcellularLocation>
        <location evidence="1">Cell membrane</location>
        <topology evidence="1">Multi-pass membrane protein</topology>
    </subcellularLocation>
</comment>
<comment type="miscellaneous">
    <text evidence="1">Carbon 2 of the heme B porphyrin ring is defined according to the Fischer nomenclature.</text>
</comment>
<comment type="similarity">
    <text evidence="1">Belongs to the UbiA prenyltransferase family. Protoheme IX farnesyltransferase subfamily.</text>
</comment>
<name>COXX_BACC0</name>
<sequence>MNHATSELHDESAVTSIPETTRLQDLKALVKMGIVNSNTLTVFTGFWLALHFNGLSVMDNLDKLFFTIVGSGLVMAGVCCLNNYIDRDIDPLMERTKTRPTVTGKYKPGFALTFGLVILLLGFVFLLLTTPMAVLMGFIGAFTYVVLYSLWTKRKYTLNTVVGSISGAVPPLIGWAAIDPSLGHPIAWMLFLIMFIWQIPHFLALAMKRVDEYRNAGIPMLPVVHGFEITKRQIMIWTVCLLPLPFYMSGLGITFMVIATLLNIGWIVLGFYGFRKKDDIKWSVQMFVYSLNYLTILFVSMIVVTFF</sequence>
<feature type="chain" id="PRO_1000199641" description="Protoheme IX farnesyltransferase">
    <location>
        <begin position="1"/>
        <end position="307"/>
    </location>
</feature>
<feature type="transmembrane region" description="Helical" evidence="1">
    <location>
        <begin position="32"/>
        <end position="52"/>
    </location>
</feature>
<feature type="transmembrane region" description="Helical" evidence="1">
    <location>
        <begin position="65"/>
        <end position="85"/>
    </location>
</feature>
<feature type="transmembrane region" description="Helical" evidence="1">
    <location>
        <begin position="108"/>
        <end position="128"/>
    </location>
</feature>
<feature type="transmembrane region" description="Helical" evidence="1">
    <location>
        <begin position="131"/>
        <end position="151"/>
    </location>
</feature>
<feature type="transmembrane region" description="Helical" evidence="1">
    <location>
        <begin position="158"/>
        <end position="178"/>
    </location>
</feature>
<feature type="transmembrane region" description="Helical" evidence="1">
    <location>
        <begin position="186"/>
        <end position="206"/>
    </location>
</feature>
<feature type="transmembrane region" description="Helical" evidence="1">
    <location>
        <begin position="251"/>
        <end position="271"/>
    </location>
</feature>
<feature type="transmembrane region" description="Helical" evidence="1">
    <location>
        <begin position="287"/>
        <end position="307"/>
    </location>
</feature>
<gene>
    <name evidence="1" type="primary">ctaB</name>
    <name type="ordered locus">BCAH820_3960</name>
</gene>